<evidence type="ECO:0000250" key="1"/>
<evidence type="ECO:0000255" key="2">
    <source>
        <dbReference type="PROSITE-ProRule" id="PRU00691"/>
    </source>
</evidence>
<evidence type="ECO:0000305" key="3"/>
<organism>
    <name type="scientific">Ricinus communis</name>
    <name type="common">Castor bean</name>
    <dbReference type="NCBI Taxonomy" id="3988"/>
    <lineage>
        <taxon>Eukaryota</taxon>
        <taxon>Viridiplantae</taxon>
        <taxon>Streptophyta</taxon>
        <taxon>Embryophyta</taxon>
        <taxon>Tracheophyta</taxon>
        <taxon>Spermatophyta</taxon>
        <taxon>Magnoliopsida</taxon>
        <taxon>eudicotyledons</taxon>
        <taxon>Gunneridae</taxon>
        <taxon>Pentapetalae</taxon>
        <taxon>rosids</taxon>
        <taxon>fabids</taxon>
        <taxon>Malpighiales</taxon>
        <taxon>Euphorbiaceae</taxon>
        <taxon>Acalyphoideae</taxon>
        <taxon>Acalypheae</taxon>
        <taxon>Ricinus</taxon>
    </lineage>
</organism>
<name>TRXH_RICCO</name>
<proteinExistence type="inferred from homology"/>
<accession>Q43636</accession>
<reference key="1">
    <citation type="submission" date="1996-04" db="EMBL/GenBank/DDBJ databases">
        <authorList>
            <person name="Szederkenyi J."/>
            <person name="Dolgener E."/>
            <person name="Schobert C."/>
        </authorList>
    </citation>
    <scope>NUCLEOTIDE SEQUENCE [MRNA]</scope>
    <source>
        <strain>cv. Sanguineus</strain>
        <tissue>Cotyledon</tissue>
    </source>
</reference>
<keyword id="KW-0963">Cytoplasm</keyword>
<keyword id="KW-1015">Disulfide bond</keyword>
<keyword id="KW-0249">Electron transport</keyword>
<keyword id="KW-0676">Redox-active center</keyword>
<keyword id="KW-0813">Transport</keyword>
<sequence>MAAEEGQVIGCHTVEAWNEQLQKGNDTKGLIVVDFTASWCGPCRFIAPFLAELAKKLPNVTFLKVDVDELKTVAHEWAVESMPTFMFLKEGKIMDKVVGAKKDELQQTIAKHMATAST</sequence>
<protein>
    <recommendedName>
        <fullName>Thioredoxin H-type</fullName>
        <shortName>Trx-H</shortName>
    </recommendedName>
</protein>
<dbReference type="EMBL" id="Z70677">
    <property type="protein sequence ID" value="CAA94534.1"/>
    <property type="molecule type" value="mRNA"/>
</dbReference>
<dbReference type="PIR" id="T10170">
    <property type="entry name" value="T10170"/>
</dbReference>
<dbReference type="RefSeq" id="NP_001410801.1">
    <property type="nucleotide sequence ID" value="NM_001423872.1"/>
</dbReference>
<dbReference type="RefSeq" id="XP_002534131.1">
    <property type="nucleotide sequence ID" value="XM_002534085.2"/>
</dbReference>
<dbReference type="SMR" id="Q43636"/>
<dbReference type="GeneID" id="8266412"/>
<dbReference type="KEGG" id="rcu:8266412"/>
<dbReference type="eggNOG" id="KOG0907">
    <property type="taxonomic scope" value="Eukaryota"/>
</dbReference>
<dbReference type="OrthoDB" id="10263751at2759"/>
<dbReference type="GO" id="GO:0005737">
    <property type="term" value="C:cytoplasm"/>
    <property type="evidence" value="ECO:0007669"/>
    <property type="project" value="UniProtKB-SubCell"/>
</dbReference>
<dbReference type="CDD" id="cd02947">
    <property type="entry name" value="TRX_family"/>
    <property type="match status" value="1"/>
</dbReference>
<dbReference type="FunFam" id="3.40.30.10:FF:000104">
    <property type="entry name" value="Thioredoxin"/>
    <property type="match status" value="1"/>
</dbReference>
<dbReference type="Gene3D" id="3.40.30.10">
    <property type="entry name" value="Glutaredoxin"/>
    <property type="match status" value="1"/>
</dbReference>
<dbReference type="InterPro" id="IPR036249">
    <property type="entry name" value="Thioredoxin-like_sf"/>
</dbReference>
<dbReference type="InterPro" id="IPR017937">
    <property type="entry name" value="Thioredoxin_CS"/>
</dbReference>
<dbReference type="InterPro" id="IPR013766">
    <property type="entry name" value="Thioredoxin_domain"/>
</dbReference>
<dbReference type="InterPro" id="IPR050620">
    <property type="entry name" value="Thioredoxin_H-type-like"/>
</dbReference>
<dbReference type="PANTHER" id="PTHR10438">
    <property type="entry name" value="THIOREDOXIN"/>
    <property type="match status" value="1"/>
</dbReference>
<dbReference type="PANTHER" id="PTHR10438:SF425">
    <property type="entry name" value="THIOREDOXIN H1"/>
    <property type="match status" value="1"/>
</dbReference>
<dbReference type="Pfam" id="PF00085">
    <property type="entry name" value="Thioredoxin"/>
    <property type="match status" value="1"/>
</dbReference>
<dbReference type="PRINTS" id="PR00421">
    <property type="entry name" value="THIOREDOXIN"/>
</dbReference>
<dbReference type="SUPFAM" id="SSF52833">
    <property type="entry name" value="Thioredoxin-like"/>
    <property type="match status" value="1"/>
</dbReference>
<dbReference type="PROSITE" id="PS00194">
    <property type="entry name" value="THIOREDOXIN_1"/>
    <property type="match status" value="1"/>
</dbReference>
<dbReference type="PROSITE" id="PS51352">
    <property type="entry name" value="THIOREDOXIN_2"/>
    <property type="match status" value="1"/>
</dbReference>
<feature type="chain" id="PRO_0000120060" description="Thioredoxin H-type">
    <location>
        <begin position="1"/>
        <end position="118"/>
    </location>
</feature>
<feature type="domain" description="Thioredoxin" evidence="2">
    <location>
        <begin position="2"/>
        <end position="114"/>
    </location>
</feature>
<feature type="active site" description="Nucleophile" evidence="1">
    <location>
        <position position="40"/>
    </location>
</feature>
<feature type="active site" description="Nucleophile" evidence="1">
    <location>
        <position position="43"/>
    </location>
</feature>
<feature type="site" description="Deprotonates C-terminal active site Cys" evidence="1">
    <location>
        <position position="34"/>
    </location>
</feature>
<feature type="site" description="Contributes to redox potential value" evidence="1">
    <location>
        <position position="41"/>
    </location>
</feature>
<feature type="site" description="Contributes to redox potential value" evidence="1">
    <location>
        <position position="42"/>
    </location>
</feature>
<feature type="disulfide bond" description="Redox-active" evidence="2">
    <location>
        <begin position="40"/>
        <end position="43"/>
    </location>
</feature>
<comment type="function">
    <text evidence="1">Participates in various redox reactions through the reversible oxidation of the active center dithiol to a disulfide. The H form is known to activate a number of cytosolic enzymes (By similarity).</text>
</comment>
<comment type="subcellular location">
    <subcellularLocation>
        <location evidence="1">Cytoplasm</location>
    </subcellularLocation>
</comment>
<comment type="similarity">
    <text evidence="3">Belongs to the thioredoxin family. Plant H-type subfamily.</text>
</comment>